<dbReference type="EC" id="3.2.2.23" evidence="2"/>
<dbReference type="EC" id="4.2.99.18" evidence="2"/>
<dbReference type="EMBL" id="CP001111">
    <property type="protein sequence ID" value="ACF49750.1"/>
    <property type="molecule type" value="Genomic_DNA"/>
</dbReference>
<dbReference type="RefSeq" id="WP_012509626.1">
    <property type="nucleotide sequence ID" value="NC_011071.1"/>
</dbReference>
<dbReference type="SMR" id="B4SRN0"/>
<dbReference type="STRING" id="391008.Smal_0045"/>
<dbReference type="KEGG" id="smt:Smal_0045"/>
<dbReference type="eggNOG" id="COG0266">
    <property type="taxonomic scope" value="Bacteria"/>
</dbReference>
<dbReference type="HOGENOM" id="CLU_038423_1_1_6"/>
<dbReference type="OrthoDB" id="9800855at2"/>
<dbReference type="Proteomes" id="UP000001867">
    <property type="component" value="Chromosome"/>
</dbReference>
<dbReference type="GO" id="GO:0034039">
    <property type="term" value="F:8-oxo-7,8-dihydroguanine DNA N-glycosylase activity"/>
    <property type="evidence" value="ECO:0007669"/>
    <property type="project" value="TreeGrafter"/>
</dbReference>
<dbReference type="GO" id="GO:0140078">
    <property type="term" value="F:class I DNA-(apurinic or apyrimidinic site) endonuclease activity"/>
    <property type="evidence" value="ECO:0007669"/>
    <property type="project" value="UniProtKB-EC"/>
</dbReference>
<dbReference type="GO" id="GO:0003684">
    <property type="term" value="F:damaged DNA binding"/>
    <property type="evidence" value="ECO:0007669"/>
    <property type="project" value="InterPro"/>
</dbReference>
<dbReference type="GO" id="GO:0008270">
    <property type="term" value="F:zinc ion binding"/>
    <property type="evidence" value="ECO:0007669"/>
    <property type="project" value="UniProtKB-UniRule"/>
</dbReference>
<dbReference type="GO" id="GO:0006284">
    <property type="term" value="P:base-excision repair"/>
    <property type="evidence" value="ECO:0007669"/>
    <property type="project" value="InterPro"/>
</dbReference>
<dbReference type="CDD" id="cd08966">
    <property type="entry name" value="EcFpg-like_N"/>
    <property type="match status" value="1"/>
</dbReference>
<dbReference type="FunFam" id="1.10.8.50:FF:000003">
    <property type="entry name" value="Formamidopyrimidine-DNA glycosylase"/>
    <property type="match status" value="1"/>
</dbReference>
<dbReference type="FunFam" id="3.20.190.10:FF:000001">
    <property type="entry name" value="Formamidopyrimidine-DNA glycosylase"/>
    <property type="match status" value="1"/>
</dbReference>
<dbReference type="Gene3D" id="1.10.8.50">
    <property type="match status" value="1"/>
</dbReference>
<dbReference type="Gene3D" id="3.20.190.10">
    <property type="entry name" value="MutM-like, N-terminal"/>
    <property type="match status" value="1"/>
</dbReference>
<dbReference type="HAMAP" id="MF_00103">
    <property type="entry name" value="Fapy_DNA_glycosyl"/>
    <property type="match status" value="1"/>
</dbReference>
<dbReference type="InterPro" id="IPR015886">
    <property type="entry name" value="DNA_glyclase/AP_lyase_DNA-bd"/>
</dbReference>
<dbReference type="InterPro" id="IPR015887">
    <property type="entry name" value="DNA_glyclase_Znf_dom_DNA_BS"/>
</dbReference>
<dbReference type="InterPro" id="IPR020629">
    <property type="entry name" value="Formamido-pyr_DNA_Glyclase"/>
</dbReference>
<dbReference type="InterPro" id="IPR012319">
    <property type="entry name" value="FPG_cat"/>
</dbReference>
<dbReference type="InterPro" id="IPR035937">
    <property type="entry name" value="MutM-like_N-ter"/>
</dbReference>
<dbReference type="InterPro" id="IPR010979">
    <property type="entry name" value="Ribosomal_uS13-like_H2TH"/>
</dbReference>
<dbReference type="InterPro" id="IPR000214">
    <property type="entry name" value="Znf_DNA_glyclase/AP_lyase"/>
</dbReference>
<dbReference type="InterPro" id="IPR010663">
    <property type="entry name" value="Znf_FPG/IleRS"/>
</dbReference>
<dbReference type="NCBIfam" id="TIGR00577">
    <property type="entry name" value="fpg"/>
    <property type="match status" value="1"/>
</dbReference>
<dbReference type="NCBIfam" id="NF002211">
    <property type="entry name" value="PRK01103.1"/>
    <property type="match status" value="1"/>
</dbReference>
<dbReference type="PANTHER" id="PTHR22993">
    <property type="entry name" value="FORMAMIDOPYRIMIDINE-DNA GLYCOSYLASE"/>
    <property type="match status" value="1"/>
</dbReference>
<dbReference type="PANTHER" id="PTHR22993:SF9">
    <property type="entry name" value="FORMAMIDOPYRIMIDINE-DNA GLYCOSYLASE"/>
    <property type="match status" value="1"/>
</dbReference>
<dbReference type="Pfam" id="PF01149">
    <property type="entry name" value="Fapy_DNA_glyco"/>
    <property type="match status" value="1"/>
</dbReference>
<dbReference type="Pfam" id="PF06831">
    <property type="entry name" value="H2TH"/>
    <property type="match status" value="1"/>
</dbReference>
<dbReference type="Pfam" id="PF06827">
    <property type="entry name" value="zf-FPG_IleRS"/>
    <property type="match status" value="1"/>
</dbReference>
<dbReference type="SMART" id="SM00898">
    <property type="entry name" value="Fapy_DNA_glyco"/>
    <property type="match status" value="1"/>
</dbReference>
<dbReference type="SMART" id="SM01232">
    <property type="entry name" value="H2TH"/>
    <property type="match status" value="1"/>
</dbReference>
<dbReference type="SUPFAM" id="SSF57716">
    <property type="entry name" value="Glucocorticoid receptor-like (DNA-binding domain)"/>
    <property type="match status" value="1"/>
</dbReference>
<dbReference type="SUPFAM" id="SSF81624">
    <property type="entry name" value="N-terminal domain of MutM-like DNA repair proteins"/>
    <property type="match status" value="1"/>
</dbReference>
<dbReference type="SUPFAM" id="SSF46946">
    <property type="entry name" value="S13-like H2TH domain"/>
    <property type="match status" value="1"/>
</dbReference>
<dbReference type="PROSITE" id="PS51068">
    <property type="entry name" value="FPG_CAT"/>
    <property type="match status" value="1"/>
</dbReference>
<dbReference type="PROSITE" id="PS01242">
    <property type="entry name" value="ZF_FPG_1"/>
    <property type="match status" value="1"/>
</dbReference>
<dbReference type="PROSITE" id="PS51066">
    <property type="entry name" value="ZF_FPG_2"/>
    <property type="match status" value="1"/>
</dbReference>
<keyword id="KW-0227">DNA damage</keyword>
<keyword id="KW-0234">DNA repair</keyword>
<keyword id="KW-0238">DNA-binding</keyword>
<keyword id="KW-0326">Glycosidase</keyword>
<keyword id="KW-0378">Hydrolase</keyword>
<keyword id="KW-0456">Lyase</keyword>
<keyword id="KW-0479">Metal-binding</keyword>
<keyword id="KW-0511">Multifunctional enzyme</keyword>
<keyword id="KW-0862">Zinc</keyword>
<keyword id="KW-0863">Zinc-finger</keyword>
<accession>B4SRN0</accession>
<reference key="1">
    <citation type="submission" date="2008-06" db="EMBL/GenBank/DDBJ databases">
        <title>Complete sequence of Stenotrophomonas maltophilia R551-3.</title>
        <authorList>
            <consortium name="US DOE Joint Genome Institute"/>
            <person name="Lucas S."/>
            <person name="Copeland A."/>
            <person name="Lapidus A."/>
            <person name="Glavina del Rio T."/>
            <person name="Dalin E."/>
            <person name="Tice H."/>
            <person name="Pitluck S."/>
            <person name="Chain P."/>
            <person name="Malfatti S."/>
            <person name="Shin M."/>
            <person name="Vergez L."/>
            <person name="Lang D."/>
            <person name="Schmutz J."/>
            <person name="Larimer F."/>
            <person name="Land M."/>
            <person name="Hauser L."/>
            <person name="Kyrpides N."/>
            <person name="Mikhailova N."/>
            <person name="Taghavi S."/>
            <person name="Monchy S."/>
            <person name="Newman L."/>
            <person name="Vangronsveld J."/>
            <person name="van der Lelie D."/>
            <person name="Richardson P."/>
        </authorList>
    </citation>
    <scope>NUCLEOTIDE SEQUENCE [LARGE SCALE GENOMIC DNA]</scope>
    <source>
        <strain>R551-3</strain>
    </source>
</reference>
<organism>
    <name type="scientific">Stenotrophomonas maltophilia (strain R551-3)</name>
    <dbReference type="NCBI Taxonomy" id="391008"/>
    <lineage>
        <taxon>Bacteria</taxon>
        <taxon>Pseudomonadati</taxon>
        <taxon>Pseudomonadota</taxon>
        <taxon>Gammaproteobacteria</taxon>
        <taxon>Lysobacterales</taxon>
        <taxon>Lysobacteraceae</taxon>
        <taxon>Stenotrophomonas</taxon>
        <taxon>Stenotrophomonas maltophilia group</taxon>
    </lineage>
</organism>
<sequence>MPELPEVETTRRGLAPHLQGRRVHGVILRRADLRWPIPPEVAGQLPGQRIDAVRRRAKYLLLDTAAGSAVLHLGMSGSLRVLPGDTPLRAHDHVDISLDNGRLLRFNDPRRFGSLLWQPAGEVHPLLQGLGPEPLDDAFDGNYLFARSRGRSAPVKTFLMDQAVVVGVGNIYAAESLFKAGISPLREAGKISRERYQRLADAVKEILGYAITRGGTTLRDFISPDGAPGYFEQELLVYGRDGLPCPNCGRALKHATIGQRASVWCSHCQR</sequence>
<gene>
    <name evidence="2" type="primary">mutM</name>
    <name evidence="2" type="synonym">fpg</name>
    <name type="ordered locus">Smal_0045</name>
</gene>
<proteinExistence type="inferred from homology"/>
<name>FPG_STRM5</name>
<feature type="initiator methionine" description="Removed" evidence="1">
    <location>
        <position position="1"/>
    </location>
</feature>
<feature type="chain" id="PRO_1000094081" description="Formamidopyrimidine-DNA glycosylase">
    <location>
        <begin position="2"/>
        <end position="270"/>
    </location>
</feature>
<feature type="zinc finger region" description="FPG-type" evidence="2">
    <location>
        <begin position="236"/>
        <end position="270"/>
    </location>
</feature>
<feature type="active site" description="Schiff-base intermediate with DNA" evidence="2">
    <location>
        <position position="2"/>
    </location>
</feature>
<feature type="active site" description="Proton donor" evidence="2">
    <location>
        <position position="3"/>
    </location>
</feature>
<feature type="active site" description="Proton donor; for beta-elimination activity" evidence="2">
    <location>
        <position position="58"/>
    </location>
</feature>
<feature type="active site" description="Proton donor; for delta-elimination activity" evidence="2">
    <location>
        <position position="260"/>
    </location>
</feature>
<feature type="binding site" evidence="2">
    <location>
        <position position="91"/>
    </location>
    <ligand>
        <name>DNA</name>
        <dbReference type="ChEBI" id="CHEBI:16991"/>
    </ligand>
</feature>
<feature type="binding site" evidence="2">
    <location>
        <position position="110"/>
    </location>
    <ligand>
        <name>DNA</name>
        <dbReference type="ChEBI" id="CHEBI:16991"/>
    </ligand>
</feature>
<feature type="binding site" evidence="2">
    <location>
        <position position="151"/>
    </location>
    <ligand>
        <name>DNA</name>
        <dbReference type="ChEBI" id="CHEBI:16991"/>
    </ligand>
</feature>
<protein>
    <recommendedName>
        <fullName evidence="2">Formamidopyrimidine-DNA glycosylase</fullName>
        <shortName evidence="2">Fapy-DNA glycosylase</shortName>
        <ecNumber evidence="2">3.2.2.23</ecNumber>
    </recommendedName>
    <alternativeName>
        <fullName evidence="2">DNA-(apurinic or apyrimidinic site) lyase MutM</fullName>
        <shortName evidence="2">AP lyase MutM</shortName>
        <ecNumber evidence="2">4.2.99.18</ecNumber>
    </alternativeName>
</protein>
<evidence type="ECO:0000250" key="1"/>
<evidence type="ECO:0000255" key="2">
    <source>
        <dbReference type="HAMAP-Rule" id="MF_00103"/>
    </source>
</evidence>
<comment type="function">
    <text evidence="2">Involved in base excision repair of DNA damaged by oxidation or by mutagenic agents. Acts as a DNA glycosylase that recognizes and removes damaged bases. Has a preference for oxidized purines, such as 7,8-dihydro-8-oxoguanine (8-oxoG). Has AP (apurinic/apyrimidinic) lyase activity and introduces nicks in the DNA strand. Cleaves the DNA backbone by beta-delta elimination to generate a single-strand break at the site of the removed base with both 3'- and 5'-phosphates.</text>
</comment>
<comment type="catalytic activity">
    <reaction evidence="2">
        <text>Hydrolysis of DNA containing ring-opened 7-methylguanine residues, releasing 2,6-diamino-4-hydroxy-5-(N-methyl)formamidopyrimidine.</text>
        <dbReference type="EC" id="3.2.2.23"/>
    </reaction>
</comment>
<comment type="catalytic activity">
    <reaction evidence="2">
        <text>2'-deoxyribonucleotide-(2'-deoxyribose 5'-phosphate)-2'-deoxyribonucleotide-DNA = a 3'-end 2'-deoxyribonucleotide-(2,3-dehydro-2,3-deoxyribose 5'-phosphate)-DNA + a 5'-end 5'-phospho-2'-deoxyribonucleoside-DNA + H(+)</text>
        <dbReference type="Rhea" id="RHEA:66592"/>
        <dbReference type="Rhea" id="RHEA-COMP:13180"/>
        <dbReference type="Rhea" id="RHEA-COMP:16897"/>
        <dbReference type="Rhea" id="RHEA-COMP:17067"/>
        <dbReference type="ChEBI" id="CHEBI:15378"/>
        <dbReference type="ChEBI" id="CHEBI:136412"/>
        <dbReference type="ChEBI" id="CHEBI:157695"/>
        <dbReference type="ChEBI" id="CHEBI:167181"/>
        <dbReference type="EC" id="4.2.99.18"/>
    </reaction>
</comment>
<comment type="cofactor">
    <cofactor evidence="2">
        <name>Zn(2+)</name>
        <dbReference type="ChEBI" id="CHEBI:29105"/>
    </cofactor>
    <text evidence="2">Binds 1 zinc ion per subunit.</text>
</comment>
<comment type="subunit">
    <text evidence="2">Monomer.</text>
</comment>
<comment type="similarity">
    <text evidence="2">Belongs to the FPG family.</text>
</comment>